<feature type="chain" id="PRO_0000110722" description="Orotate phosphoribosyltransferase">
    <location>
        <begin position="1"/>
        <end position="216"/>
    </location>
</feature>
<feature type="binding site" evidence="1">
    <location>
        <position position="101"/>
    </location>
    <ligand>
        <name>5-phospho-alpha-D-ribose 1-diphosphate</name>
        <dbReference type="ChEBI" id="CHEBI:58017"/>
        <note>ligand shared between dimeric partners</note>
    </ligand>
</feature>
<feature type="binding site" evidence="1">
    <location>
        <position position="105"/>
    </location>
    <ligand>
        <name>5-phospho-alpha-D-ribose 1-diphosphate</name>
        <dbReference type="ChEBI" id="CHEBI:58017"/>
        <note>ligand shared between dimeric partners</note>
    </ligand>
</feature>
<feature type="binding site" evidence="1">
    <location>
        <position position="107"/>
    </location>
    <ligand>
        <name>5-phospho-alpha-D-ribose 1-diphosphate</name>
        <dbReference type="ChEBI" id="CHEBI:58017"/>
        <note>ligand shared between dimeric partners</note>
    </ligand>
</feature>
<feature type="binding site" description="in other chain" evidence="1">
    <location>
        <begin position="127"/>
        <end position="135"/>
    </location>
    <ligand>
        <name>5-phospho-alpha-D-ribose 1-diphosphate</name>
        <dbReference type="ChEBI" id="CHEBI:58017"/>
        <note>ligand shared between dimeric partners</note>
    </ligand>
</feature>
<feature type="binding site" evidence="1">
    <location>
        <position position="131"/>
    </location>
    <ligand>
        <name>orotate</name>
        <dbReference type="ChEBI" id="CHEBI:30839"/>
    </ligand>
</feature>
<name>PYRE_CUTAK</name>
<proteinExistence type="inferred from homology"/>
<keyword id="KW-0328">Glycosyltransferase</keyword>
<keyword id="KW-0460">Magnesium</keyword>
<keyword id="KW-0665">Pyrimidine biosynthesis</keyword>
<keyword id="KW-0808">Transferase</keyword>
<evidence type="ECO:0000255" key="1">
    <source>
        <dbReference type="HAMAP-Rule" id="MF_01208"/>
    </source>
</evidence>
<organism>
    <name type="scientific">Cutibacterium acnes (strain DSM 16379 / KPA171202)</name>
    <name type="common">Propionibacterium acnes</name>
    <dbReference type="NCBI Taxonomy" id="267747"/>
    <lineage>
        <taxon>Bacteria</taxon>
        <taxon>Bacillati</taxon>
        <taxon>Actinomycetota</taxon>
        <taxon>Actinomycetes</taxon>
        <taxon>Propionibacteriales</taxon>
        <taxon>Propionibacteriaceae</taxon>
        <taxon>Cutibacterium</taxon>
    </lineage>
</organism>
<dbReference type="EC" id="2.4.2.10" evidence="1"/>
<dbReference type="EMBL" id="AE017283">
    <property type="protein sequence ID" value="AAT82756.1"/>
    <property type="molecule type" value="Genomic_DNA"/>
</dbReference>
<dbReference type="RefSeq" id="WP_002517721.1">
    <property type="nucleotide sequence ID" value="NZ_CP025935.1"/>
</dbReference>
<dbReference type="SMR" id="Q6A910"/>
<dbReference type="EnsemblBacteria" id="AAT82756">
    <property type="protein sequence ID" value="AAT82756"/>
    <property type="gene ID" value="PPA1004"/>
</dbReference>
<dbReference type="KEGG" id="pac:PPA1004"/>
<dbReference type="PATRIC" id="fig|267747.3.peg.1039"/>
<dbReference type="eggNOG" id="COG0461">
    <property type="taxonomic scope" value="Bacteria"/>
</dbReference>
<dbReference type="HOGENOM" id="CLU_074878_1_1_11"/>
<dbReference type="UniPathway" id="UPA00070">
    <property type="reaction ID" value="UER00119"/>
</dbReference>
<dbReference type="Proteomes" id="UP000000603">
    <property type="component" value="Chromosome"/>
</dbReference>
<dbReference type="GO" id="GO:0000287">
    <property type="term" value="F:magnesium ion binding"/>
    <property type="evidence" value="ECO:0007669"/>
    <property type="project" value="UniProtKB-UniRule"/>
</dbReference>
<dbReference type="GO" id="GO:0004588">
    <property type="term" value="F:orotate phosphoribosyltransferase activity"/>
    <property type="evidence" value="ECO:0007669"/>
    <property type="project" value="UniProtKB-UniRule"/>
</dbReference>
<dbReference type="GO" id="GO:0044205">
    <property type="term" value="P:'de novo' UMP biosynthetic process"/>
    <property type="evidence" value="ECO:0007669"/>
    <property type="project" value="UniProtKB-UniRule"/>
</dbReference>
<dbReference type="GO" id="GO:0019856">
    <property type="term" value="P:pyrimidine nucleobase biosynthetic process"/>
    <property type="evidence" value="ECO:0007669"/>
    <property type="project" value="TreeGrafter"/>
</dbReference>
<dbReference type="CDD" id="cd06223">
    <property type="entry name" value="PRTases_typeI"/>
    <property type="match status" value="1"/>
</dbReference>
<dbReference type="Gene3D" id="3.40.50.2020">
    <property type="match status" value="1"/>
</dbReference>
<dbReference type="HAMAP" id="MF_01208">
    <property type="entry name" value="PyrE"/>
    <property type="match status" value="1"/>
</dbReference>
<dbReference type="InterPro" id="IPR023031">
    <property type="entry name" value="OPRT"/>
</dbReference>
<dbReference type="InterPro" id="IPR004467">
    <property type="entry name" value="Or_phspho_trans_dom"/>
</dbReference>
<dbReference type="InterPro" id="IPR000836">
    <property type="entry name" value="PRibTrfase_dom"/>
</dbReference>
<dbReference type="InterPro" id="IPR029057">
    <property type="entry name" value="PRTase-like"/>
</dbReference>
<dbReference type="NCBIfam" id="TIGR00336">
    <property type="entry name" value="pyrE"/>
    <property type="match status" value="1"/>
</dbReference>
<dbReference type="PANTHER" id="PTHR19278">
    <property type="entry name" value="OROTATE PHOSPHORIBOSYLTRANSFERASE"/>
    <property type="match status" value="1"/>
</dbReference>
<dbReference type="PANTHER" id="PTHR19278:SF9">
    <property type="entry name" value="URIDINE 5'-MONOPHOSPHATE SYNTHASE"/>
    <property type="match status" value="1"/>
</dbReference>
<dbReference type="Pfam" id="PF00156">
    <property type="entry name" value="Pribosyltran"/>
    <property type="match status" value="1"/>
</dbReference>
<dbReference type="SUPFAM" id="SSF53271">
    <property type="entry name" value="PRTase-like"/>
    <property type="match status" value="1"/>
</dbReference>
<dbReference type="PROSITE" id="PS00103">
    <property type="entry name" value="PUR_PYR_PR_TRANSFER"/>
    <property type="match status" value="1"/>
</dbReference>
<gene>
    <name evidence="1" type="primary">pyrE</name>
    <name type="ordered locus">PPA1004</name>
</gene>
<comment type="function">
    <text evidence="1">Catalyzes the transfer of a ribosyl phosphate group from 5-phosphoribose 1-diphosphate to orotate, leading to the formation of orotidine monophosphate (OMP).</text>
</comment>
<comment type="catalytic activity">
    <reaction evidence="1">
        <text>orotidine 5'-phosphate + diphosphate = orotate + 5-phospho-alpha-D-ribose 1-diphosphate</text>
        <dbReference type="Rhea" id="RHEA:10380"/>
        <dbReference type="ChEBI" id="CHEBI:30839"/>
        <dbReference type="ChEBI" id="CHEBI:33019"/>
        <dbReference type="ChEBI" id="CHEBI:57538"/>
        <dbReference type="ChEBI" id="CHEBI:58017"/>
        <dbReference type="EC" id="2.4.2.10"/>
    </reaction>
</comment>
<comment type="cofactor">
    <cofactor evidence="1">
        <name>Mg(2+)</name>
        <dbReference type="ChEBI" id="CHEBI:18420"/>
    </cofactor>
</comment>
<comment type="pathway">
    <text evidence="1">Pyrimidine metabolism; UMP biosynthesis via de novo pathway; UMP from orotate: step 1/2.</text>
</comment>
<comment type="subunit">
    <text evidence="1">Homodimer.</text>
</comment>
<comment type="similarity">
    <text evidence="1">Belongs to the purine/pyrimidine phosphoribosyltransferase family. PyrE subfamily.</text>
</comment>
<protein>
    <recommendedName>
        <fullName evidence="1">Orotate phosphoribosyltransferase</fullName>
        <shortName evidence="1">OPRT</shortName>
        <shortName evidence="1">OPRTase</shortName>
        <ecNumber evidence="1">2.4.2.10</ecNumber>
    </recommendedName>
</protein>
<sequence length="216" mass="23061">MTVTNNEIAREFAERLLAIEAVSLSPDAPFTWASGLHSPIYCDNRVTLSDPQTRDLIADGLASLVRTNFHQVDVVAGTATAGIAHAALAADRLGAPMAYVRSVPKDHGRGNQIEGRIPAHSKVIMVEDLISTGGSVLKAAQAVEREGSTVVGVLALFSYELEKGHRAFEKAGVPLYTLSNYPILIEVAAESGRITSEQQATLATWSSDPQAWSDAH</sequence>
<accession>Q6A910</accession>
<reference key="1">
    <citation type="journal article" date="2004" name="Science">
        <title>The complete genome sequence of Propionibacterium acnes, a commensal of human skin.</title>
        <authorList>
            <person name="Brueggemann H."/>
            <person name="Henne A."/>
            <person name="Hoster F."/>
            <person name="Liesegang H."/>
            <person name="Wiezer A."/>
            <person name="Strittmatter A."/>
            <person name="Hujer S."/>
            <person name="Duerre P."/>
            <person name="Gottschalk G."/>
        </authorList>
    </citation>
    <scope>NUCLEOTIDE SEQUENCE [LARGE SCALE GENOMIC DNA]</scope>
    <source>
        <strain>DSM 16379 / KPA171202</strain>
    </source>
</reference>